<comment type="function">
    <text evidence="1">A type II topoisomerase that negatively supercoils closed circular double-stranded (ds) DNA in an ATP-dependent manner to modulate DNA topology and maintain chromosomes in an underwound state. Negative supercoiling favors strand separation, and DNA replication, transcription, recombination and repair, all of which involve strand separation. Also able to catalyze the interconversion of other topological isomers of dsDNA rings, including catenanes and knotted rings. Type II topoisomerases break and join 2 DNA strands simultaneously in an ATP-dependent manner.</text>
</comment>
<comment type="catalytic activity">
    <reaction evidence="2">
        <text>ATP-dependent breakage, passage and rejoining of double-stranded DNA.</text>
        <dbReference type="EC" id="5.6.2.2"/>
    </reaction>
</comment>
<comment type="subunit">
    <text evidence="1">Heterotetramer, composed of two GyrA and two GyrB chains. In the heterotetramer, GyrA contains the active site tyrosine that forms a transient covalent intermediate with DNA, while GyrB binds cofactors and catalyzes ATP hydrolysis.</text>
</comment>
<comment type="subcellular location">
    <subcellularLocation>
        <location evidence="1">Cytoplasm</location>
    </subcellularLocation>
</comment>
<comment type="PTM">
    <text evidence="3">This protein undergoes a protein self splicing that involves a post-translational excision of the intervening region (intein) followed by peptide ligation.</text>
</comment>
<comment type="miscellaneous">
    <text evidence="1">Few gyrases are as efficient as E.coli at forming negative supercoils. Not all organisms have 2 type II topoisomerases; in organisms with a single type II topoisomerase this enzyme also has to decatenate newly replicated chromosomes.</text>
</comment>
<comment type="similarity">
    <text>Belongs to the type II topoisomerase GyrA/ParC subunit family.</text>
</comment>
<protein>
    <recommendedName>
        <fullName>DNA gyrase subunit A</fullName>
        <ecNumber evidence="2">5.6.2.2</ecNumber>
    </recommendedName>
    <component>
        <recommendedName>
            <fullName>Mxe GyrA intein</fullName>
        </recommendedName>
    </component>
</protein>
<keyword id="KW-0002">3D-structure</keyword>
<keyword id="KW-0067">ATP-binding</keyword>
<keyword id="KW-0068">Autocatalytic cleavage</keyword>
<keyword id="KW-0963">Cytoplasm</keyword>
<keyword id="KW-0238">DNA-binding</keyword>
<keyword id="KW-0413">Isomerase</keyword>
<keyword id="KW-0547">Nucleotide-binding</keyword>
<keyword id="KW-0651">Protein splicing</keyword>
<keyword id="KW-0799">Topoisomerase</keyword>
<feature type="chain" id="PRO_0000034813" description="DNA gyrase subunit A, 1st part">
    <location>
        <begin position="1" status="less than"/>
        <end position="65"/>
    </location>
</feature>
<feature type="chain" id="PRO_0000034814" description="Mxe GyrA intein">
    <location>
        <begin position="66"/>
        <end position="263"/>
    </location>
</feature>
<feature type="chain" id="PRO_0000034815" description="DNA gyrase subunit A, 2nd part">
    <location>
        <begin position="264"/>
        <end position="327" status="greater than"/>
    </location>
</feature>
<feature type="domain" description="Topo IIA-type catalytic" evidence="2">
    <location>
        <begin position="1"/>
        <end position="327"/>
    </location>
</feature>
<feature type="active site" description="O-(5'-phospho-DNA)-tyrosine intermediate" evidence="2">
    <location>
        <position position="65"/>
    </location>
</feature>
<feature type="non-terminal residue">
    <location>
        <position position="1"/>
    </location>
</feature>
<feature type="non-terminal residue">
    <location>
        <position position="327"/>
    </location>
</feature>
<feature type="strand" evidence="4">
    <location>
        <begin position="72"/>
        <end position="74"/>
    </location>
</feature>
<feature type="strand" evidence="4">
    <location>
        <begin position="80"/>
        <end position="82"/>
    </location>
</feature>
<feature type="helix" evidence="4">
    <location>
        <begin position="83"/>
        <end position="85"/>
    </location>
</feature>
<feature type="strand" evidence="4">
    <location>
        <begin position="94"/>
        <end position="103"/>
    </location>
</feature>
<feature type="strand" evidence="4">
    <location>
        <begin position="109"/>
        <end position="128"/>
    </location>
</feature>
<feature type="strand" evidence="4">
    <location>
        <begin position="133"/>
        <end position="136"/>
    </location>
</feature>
<feature type="strand" evidence="4">
    <location>
        <begin position="141"/>
        <end position="148"/>
    </location>
</feature>
<feature type="strand" evidence="4">
    <location>
        <begin position="151"/>
        <end position="158"/>
    </location>
</feature>
<feature type="helix" evidence="4">
    <location>
        <begin position="159"/>
        <end position="161"/>
    </location>
</feature>
<feature type="strand" evidence="4">
    <location>
        <begin position="167"/>
        <end position="171"/>
    </location>
</feature>
<feature type="helix" evidence="4">
    <location>
        <begin position="172"/>
        <end position="174"/>
    </location>
</feature>
<feature type="helix" evidence="4">
    <location>
        <begin position="201"/>
        <end position="207"/>
    </location>
</feature>
<feature type="strand" evidence="4">
    <location>
        <begin position="209"/>
        <end position="211"/>
    </location>
</feature>
<feature type="helix" evidence="4">
    <location>
        <begin position="214"/>
        <end position="222"/>
    </location>
</feature>
<feature type="strand" evidence="4">
    <location>
        <begin position="226"/>
        <end position="251"/>
    </location>
</feature>
<feature type="strand" evidence="4">
    <location>
        <begin position="253"/>
        <end position="256"/>
    </location>
</feature>
<feature type="strand" evidence="4">
    <location>
        <begin position="259"/>
        <end position="262"/>
    </location>
</feature>
<reference key="1">
    <citation type="journal article" date="1997" name="J. Bacteriol.">
        <title>The Mycobacterium xenopi GyrA protein splicing element: characterization of a minimal intein.</title>
        <authorList>
            <person name="Telenti A."/>
            <person name="Southworth M."/>
            <person name="Alcaide F."/>
            <person name="Daugelat S."/>
            <person name="Jacobs W.R. Jr."/>
            <person name="Perler F.B."/>
        </authorList>
    </citation>
    <scope>NUCLEOTIDE SEQUENCE [GENOMIC DNA]</scope>
    <source>
        <strain>IMM 5024</strain>
    </source>
</reference>
<reference key="2">
    <citation type="journal article" date="1998" name="Nat. Struct. Biol.">
        <title>Crystal structure of GyrA intein from Mycobacterium xenopi reveals structural basis of protein splicing.</title>
        <authorList>
            <person name="Klabunde T."/>
            <person name="Sharma S."/>
            <person name="Telenti A."/>
            <person name="Jacobs W.R. Jr."/>
            <person name="Sacchettini J.C."/>
        </authorList>
    </citation>
    <scope>X-RAY CRYSTALLOGRAPHY (2.2 ANGSTROMS) OF INTEIN</scope>
</reference>
<accession>P72065</accession>
<accession>P95323</accession>
<organism>
    <name type="scientific">Mycobacterium xenopi</name>
    <dbReference type="NCBI Taxonomy" id="1789"/>
    <lineage>
        <taxon>Bacteria</taxon>
        <taxon>Bacillati</taxon>
        <taxon>Actinomycetota</taxon>
        <taxon>Actinomycetes</taxon>
        <taxon>Mycobacteriales</taxon>
        <taxon>Mycobacteriaceae</taxon>
        <taxon>Mycobacterium</taxon>
    </lineage>
</organism>
<proteinExistence type="evidence at protein level"/>
<dbReference type="EC" id="5.6.2.2" evidence="2"/>
<dbReference type="EMBL" id="U67876">
    <property type="protein sequence ID" value="AAB81424.1"/>
    <property type="molecule type" value="Genomic_DNA"/>
</dbReference>
<dbReference type="PDB" id="1AM2">
    <property type="method" value="X-ray"/>
    <property type="resolution" value="2.20 A"/>
    <property type="chains" value="A=67-263"/>
</dbReference>
<dbReference type="PDB" id="4OZ6">
    <property type="method" value="X-ray"/>
    <property type="resolution" value="2.79 A"/>
    <property type="chains" value="A=66-267, B=62-65"/>
</dbReference>
<dbReference type="PDBsum" id="1AM2"/>
<dbReference type="PDBsum" id="4OZ6"/>
<dbReference type="SMR" id="P72065"/>
<dbReference type="MEROPS" id="N10.008"/>
<dbReference type="EvolutionaryTrace" id="P72065"/>
<dbReference type="GO" id="GO:0005737">
    <property type="term" value="C:cytoplasm"/>
    <property type="evidence" value="ECO:0007669"/>
    <property type="project" value="UniProtKB-SubCell"/>
</dbReference>
<dbReference type="GO" id="GO:0009330">
    <property type="term" value="C:DNA topoisomerase type II (double strand cut, ATP-hydrolyzing) complex"/>
    <property type="evidence" value="ECO:0007669"/>
    <property type="project" value="TreeGrafter"/>
</dbReference>
<dbReference type="GO" id="GO:0005524">
    <property type="term" value="F:ATP binding"/>
    <property type="evidence" value="ECO:0007669"/>
    <property type="project" value="UniProtKB-KW"/>
</dbReference>
<dbReference type="GO" id="GO:0003677">
    <property type="term" value="F:DNA binding"/>
    <property type="evidence" value="ECO:0007669"/>
    <property type="project" value="UniProtKB-KW"/>
</dbReference>
<dbReference type="GO" id="GO:0034335">
    <property type="term" value="F:DNA negative supercoiling activity"/>
    <property type="evidence" value="ECO:0007669"/>
    <property type="project" value="UniProtKB-ARBA"/>
</dbReference>
<dbReference type="GO" id="GO:0006265">
    <property type="term" value="P:DNA topological change"/>
    <property type="evidence" value="ECO:0007669"/>
    <property type="project" value="InterPro"/>
</dbReference>
<dbReference type="GO" id="GO:0016539">
    <property type="term" value="P:intein-mediated protein splicing"/>
    <property type="evidence" value="ECO:0007669"/>
    <property type="project" value="InterPro"/>
</dbReference>
<dbReference type="CDD" id="cd00081">
    <property type="entry name" value="Hint"/>
    <property type="match status" value="1"/>
</dbReference>
<dbReference type="Gene3D" id="2.170.16.10">
    <property type="entry name" value="Hedgehog/Intein (Hint) domain"/>
    <property type="match status" value="1"/>
</dbReference>
<dbReference type="Gene3D" id="3.90.199.10">
    <property type="entry name" value="Topoisomerase II, domain 5"/>
    <property type="match status" value="2"/>
</dbReference>
<dbReference type="InterPro" id="IPR003586">
    <property type="entry name" value="Hint_dom_C"/>
</dbReference>
<dbReference type="InterPro" id="IPR003587">
    <property type="entry name" value="Hint_dom_N"/>
</dbReference>
<dbReference type="InterPro" id="IPR036844">
    <property type="entry name" value="Hint_dom_sf"/>
</dbReference>
<dbReference type="InterPro" id="IPR030934">
    <property type="entry name" value="Intein_C"/>
</dbReference>
<dbReference type="InterPro" id="IPR006141">
    <property type="entry name" value="Intein_N"/>
</dbReference>
<dbReference type="InterPro" id="IPR013760">
    <property type="entry name" value="Topo_IIA-like_dom_sf"/>
</dbReference>
<dbReference type="InterPro" id="IPR013758">
    <property type="entry name" value="Topo_IIA_A/C_ab"/>
</dbReference>
<dbReference type="InterPro" id="IPR002205">
    <property type="entry name" value="Topo_IIA_dom_A"/>
</dbReference>
<dbReference type="InterPro" id="IPR050220">
    <property type="entry name" value="Type_II_DNA_Topoisomerases"/>
</dbReference>
<dbReference type="NCBIfam" id="TIGR01443">
    <property type="entry name" value="intein_Cterm"/>
    <property type="match status" value="1"/>
</dbReference>
<dbReference type="NCBIfam" id="TIGR01445">
    <property type="entry name" value="intein_Nterm"/>
    <property type="match status" value="1"/>
</dbReference>
<dbReference type="PANTHER" id="PTHR43493:SF5">
    <property type="entry name" value="DNA GYRASE SUBUNIT A, CHLOROPLASTIC_MITOCHONDRIAL"/>
    <property type="match status" value="1"/>
</dbReference>
<dbReference type="PANTHER" id="PTHR43493">
    <property type="entry name" value="DNA GYRASE/TOPOISOMERASE SUBUNIT A"/>
    <property type="match status" value="1"/>
</dbReference>
<dbReference type="Pfam" id="PF00521">
    <property type="entry name" value="DNA_topoisoIV"/>
    <property type="match status" value="2"/>
</dbReference>
<dbReference type="SMART" id="SM00305">
    <property type="entry name" value="HintC"/>
    <property type="match status" value="1"/>
</dbReference>
<dbReference type="SMART" id="SM00306">
    <property type="entry name" value="HintN"/>
    <property type="match status" value="1"/>
</dbReference>
<dbReference type="SMART" id="SM00434">
    <property type="entry name" value="TOP4c"/>
    <property type="match status" value="1"/>
</dbReference>
<dbReference type="SUPFAM" id="SSF51294">
    <property type="entry name" value="Hedgehog/intein (Hint) domain"/>
    <property type="match status" value="1"/>
</dbReference>
<dbReference type="SUPFAM" id="SSF56719">
    <property type="entry name" value="Type II DNA topoisomerase"/>
    <property type="match status" value="2"/>
</dbReference>
<dbReference type="PROSITE" id="PS50818">
    <property type="entry name" value="INTEIN_C_TER"/>
    <property type="match status" value="1"/>
</dbReference>
<dbReference type="PROSITE" id="PS50817">
    <property type="entry name" value="INTEIN_N_TER"/>
    <property type="match status" value="1"/>
</dbReference>
<dbReference type="PROSITE" id="PS52040">
    <property type="entry name" value="TOPO_IIA"/>
    <property type="match status" value="1"/>
</dbReference>
<evidence type="ECO:0000250" key="1">
    <source>
        <dbReference type="UniProtKB" id="P0AES4"/>
    </source>
</evidence>
<evidence type="ECO:0000255" key="2">
    <source>
        <dbReference type="PROSITE-ProRule" id="PRU01384"/>
    </source>
</evidence>
<evidence type="ECO:0000305" key="3">
    <source>
    </source>
</evidence>
<evidence type="ECO:0007829" key="4">
    <source>
        <dbReference type="PDB" id="1AM2"/>
    </source>
</evidence>
<name>GYRA_MYCXE</name>
<gene>
    <name type="primary">gyrA</name>
</gene>
<sequence length="327" mass="35386">RPDRSHAKSARSVAETMGNYHPHGDASIYDTLVRMAQPWSMRYPLVDGQGNFGSPGNDPPAAMRYCITGDALVALPEGESVRIADIVPGARPNSDNAIDLKVLDRHGNPVLADRLFHSGEHPVYTVRTVEGLRVTGTANHPLLCLVDVAGVPTLLWKLIDEIKPGDYAVIQRSAFSVDCAGFARGKPEFAPTTYTVGVPGLVRFLEAHHRDPDAQAIADELTDGRFYYAKVASVTDAGVQPVYSLRVDTADHAFITNGFVSHNTEAPLTPLAMEMLREIDEETVDFIPNYDGRVQEPTVLPSRFPNLLANGSGGIAVGMATNIPPHN</sequence>